<keyword id="KW-0571">Peptide transport</keyword>
<keyword id="KW-0574">Periplasm</keyword>
<keyword id="KW-0653">Protein transport</keyword>
<keyword id="KW-1185">Reference proteome</keyword>
<keyword id="KW-0732">Signal</keyword>
<keyword id="KW-0813">Transport</keyword>
<organism>
    <name type="scientific">Haemophilus influenzae (strain ATCC 51907 / DSM 11121 / KW20 / Rd)</name>
    <dbReference type="NCBI Taxonomy" id="71421"/>
    <lineage>
        <taxon>Bacteria</taxon>
        <taxon>Pseudomonadati</taxon>
        <taxon>Pseudomonadota</taxon>
        <taxon>Gammaproteobacteria</taxon>
        <taxon>Pasteurellales</taxon>
        <taxon>Pasteurellaceae</taxon>
        <taxon>Haemophilus</taxon>
    </lineage>
</organism>
<accession>P71370</accession>
<dbReference type="EMBL" id="L42023">
    <property type="protein sequence ID" value="AAC22778.1"/>
    <property type="molecule type" value="Genomic_DNA"/>
</dbReference>
<dbReference type="RefSeq" id="NP_439281.1">
    <property type="nucleotide sequence ID" value="NC_000907.1"/>
</dbReference>
<dbReference type="STRING" id="71421.HI_1124"/>
<dbReference type="EnsemblBacteria" id="AAC22778">
    <property type="protein sequence ID" value="AAC22778"/>
    <property type="gene ID" value="HI_1124"/>
</dbReference>
<dbReference type="KEGG" id="hin:HI_1124"/>
<dbReference type="PATRIC" id="fig|71421.8.peg.1173"/>
<dbReference type="eggNOG" id="COG4166">
    <property type="taxonomic scope" value="Bacteria"/>
</dbReference>
<dbReference type="HOGENOM" id="CLU_017028_0_3_6"/>
<dbReference type="OrthoDB" id="9801912at2"/>
<dbReference type="PhylomeDB" id="P71370"/>
<dbReference type="BioCyc" id="HINF71421:G1GJ1-1159-MONOMER"/>
<dbReference type="Proteomes" id="UP000000579">
    <property type="component" value="Chromosome"/>
</dbReference>
<dbReference type="GO" id="GO:0043190">
    <property type="term" value="C:ATP-binding cassette (ABC) transporter complex"/>
    <property type="evidence" value="ECO:0007669"/>
    <property type="project" value="InterPro"/>
</dbReference>
<dbReference type="GO" id="GO:0030288">
    <property type="term" value="C:outer membrane-bounded periplasmic space"/>
    <property type="evidence" value="ECO:0000318"/>
    <property type="project" value="GO_Central"/>
</dbReference>
<dbReference type="GO" id="GO:1904680">
    <property type="term" value="F:peptide transmembrane transporter activity"/>
    <property type="evidence" value="ECO:0000318"/>
    <property type="project" value="GO_Central"/>
</dbReference>
<dbReference type="GO" id="GO:0015833">
    <property type="term" value="P:peptide transport"/>
    <property type="evidence" value="ECO:0000318"/>
    <property type="project" value="GO_Central"/>
</dbReference>
<dbReference type="GO" id="GO:0015031">
    <property type="term" value="P:protein transport"/>
    <property type="evidence" value="ECO:0007669"/>
    <property type="project" value="UniProtKB-KW"/>
</dbReference>
<dbReference type="CDD" id="cd08504">
    <property type="entry name" value="PBP2_OppA"/>
    <property type="match status" value="1"/>
</dbReference>
<dbReference type="FunFam" id="3.90.76.10:FF:000001">
    <property type="entry name" value="Oligopeptide ABC transporter substrate-binding protein"/>
    <property type="match status" value="1"/>
</dbReference>
<dbReference type="FunFam" id="3.10.105.10:FF:000001">
    <property type="entry name" value="Oligopeptide ABC transporter, oligopeptide-binding protein"/>
    <property type="match status" value="1"/>
</dbReference>
<dbReference type="Gene3D" id="3.90.76.10">
    <property type="entry name" value="Dipeptide-binding Protein, Domain 1"/>
    <property type="match status" value="1"/>
</dbReference>
<dbReference type="Gene3D" id="3.10.105.10">
    <property type="entry name" value="Dipeptide-binding Protein, Domain 3"/>
    <property type="match status" value="1"/>
</dbReference>
<dbReference type="Gene3D" id="3.40.190.10">
    <property type="entry name" value="Periplasmic binding protein-like II"/>
    <property type="match status" value="1"/>
</dbReference>
<dbReference type="InterPro" id="IPR030678">
    <property type="entry name" value="Peptide/Ni-bd"/>
</dbReference>
<dbReference type="InterPro" id="IPR039424">
    <property type="entry name" value="SBP_5"/>
</dbReference>
<dbReference type="InterPro" id="IPR023765">
    <property type="entry name" value="SBP_5_CS"/>
</dbReference>
<dbReference type="InterPro" id="IPR000914">
    <property type="entry name" value="SBP_5_dom"/>
</dbReference>
<dbReference type="PANTHER" id="PTHR30290">
    <property type="entry name" value="PERIPLASMIC BINDING COMPONENT OF ABC TRANSPORTER"/>
    <property type="match status" value="1"/>
</dbReference>
<dbReference type="PANTHER" id="PTHR30290:SF10">
    <property type="entry name" value="PERIPLASMIC OLIGOPEPTIDE-BINDING PROTEIN-RELATED"/>
    <property type="match status" value="1"/>
</dbReference>
<dbReference type="Pfam" id="PF00496">
    <property type="entry name" value="SBP_bac_5"/>
    <property type="match status" value="1"/>
</dbReference>
<dbReference type="PIRSF" id="PIRSF002741">
    <property type="entry name" value="MppA"/>
    <property type="match status" value="1"/>
</dbReference>
<dbReference type="SUPFAM" id="SSF53850">
    <property type="entry name" value="Periplasmic binding protein-like II"/>
    <property type="match status" value="1"/>
</dbReference>
<dbReference type="PROSITE" id="PS01040">
    <property type="entry name" value="SBP_BACTERIAL_5"/>
    <property type="match status" value="1"/>
</dbReference>
<evidence type="ECO:0000250" key="1">
    <source>
        <dbReference type="UniProtKB" id="P23843"/>
    </source>
</evidence>
<evidence type="ECO:0000255" key="2"/>
<evidence type="ECO:0000305" key="3"/>
<proteinExistence type="inferred from homology"/>
<feature type="signal peptide" evidence="2">
    <location>
        <begin position="1"/>
        <end position="20"/>
    </location>
</feature>
<feature type="chain" id="PRO_0000031799" description="Periplasmic oligopeptide-binding protein OppA">
    <location>
        <begin position="21"/>
        <end position="541"/>
    </location>
</feature>
<gene>
    <name type="primary">oppA</name>
    <name type="ordered locus">HI_1124</name>
</gene>
<reference key="1">
    <citation type="journal article" date="1995" name="Science">
        <title>Whole-genome random sequencing and assembly of Haemophilus influenzae Rd.</title>
        <authorList>
            <person name="Fleischmann R.D."/>
            <person name="Adams M.D."/>
            <person name="White O."/>
            <person name="Clayton R.A."/>
            <person name="Kirkness E.F."/>
            <person name="Kerlavage A.R."/>
            <person name="Bult C.J."/>
            <person name="Tomb J.-F."/>
            <person name="Dougherty B.A."/>
            <person name="Merrick J.M."/>
            <person name="McKenney K."/>
            <person name="Sutton G.G."/>
            <person name="FitzHugh W."/>
            <person name="Fields C.A."/>
            <person name="Gocayne J.D."/>
            <person name="Scott J.D."/>
            <person name="Shirley R."/>
            <person name="Liu L.-I."/>
            <person name="Glodek A."/>
            <person name="Kelley J.M."/>
            <person name="Weidman J.F."/>
            <person name="Phillips C.A."/>
            <person name="Spriggs T."/>
            <person name="Hedblom E."/>
            <person name="Cotton M.D."/>
            <person name="Utterback T.R."/>
            <person name="Hanna M.C."/>
            <person name="Nguyen D.T."/>
            <person name="Saudek D.M."/>
            <person name="Brandon R.C."/>
            <person name="Fine L.D."/>
            <person name="Fritchman J.L."/>
            <person name="Fuhrmann J.L."/>
            <person name="Geoghagen N.S.M."/>
            <person name="Gnehm C.L."/>
            <person name="McDonald L.A."/>
            <person name="Small K.V."/>
            <person name="Fraser C.M."/>
            <person name="Smith H.O."/>
            <person name="Venter J.C."/>
        </authorList>
    </citation>
    <scope>NUCLEOTIDE SEQUENCE [LARGE SCALE GENOMIC DNA]</scope>
    <source>
        <strain>ATCC 51907 / DSM 11121 / KW20 / Rd</strain>
    </source>
</reference>
<sequence length="541" mass="60911">MQHKLLFSAIALALSYSAQAVIVPEGTQLDEKQHIVINNGAEPQSFDPHKTEGVPESNVAYQLLEGLVTSDSEGKLQPGAAESWENTPDFKTWTFHLRKDAKWSNGDPVTAHDFVFAWRRLVDPATAAPYASYLSYLQVENAQDIIDGKKKPAELGVEXKDDYTFVVHTTNPVPYTVSXXTHQSLLPLPXKVVEKLGDAWVKKENYVGNGAYKLANHIINEKIEFERNPLYWNDKETVINSATFLAIENPSTDVARYRAGDLDMTSYGLPPEQFAKLQKELPGEVYVTRTLGTYSYELNNKKAPFDNVNIRKALNLSLDRNVITDKVLGQGQTPTYVFTPTYIEEGHLIQQPAYSKEPMAQRNEEAIKLLEEAGYSKANPLKFSILYNTNENHKKVAIAAASMWKANTKGLIDVKLENQEWKTYIDSRRAGRYDVARAGWNADYNQATTFGNYFLSNSSNNTAKYANPEYDKAMAESYAATDAEGRAKAYAKAEEILGKDYGIVPIFNYVNPRLVKPYVKGYSGKDPQDHIYLRNLYIIKH</sequence>
<name>OPPA_HAEIN</name>
<protein>
    <recommendedName>
        <fullName evidence="3">Periplasmic oligopeptide-binding protein OppA</fullName>
    </recommendedName>
</protein>
<comment type="function">
    <text evidence="1">Part of the ABC transporter complex OppABCDF involved in the uptake of oligopeptides (By similarity). Plays an important nutritional role (By similarity). Binds peptides containing from two to five amino acid residues (By similarity).</text>
</comment>
<comment type="subunit">
    <text evidence="1">The complex is composed of two ATP-binding proteins (OppD and OppF), two transmembrane proteins (OppB and OppC) and a solute-binding protein (OppA).</text>
</comment>
<comment type="subcellular location">
    <subcellularLocation>
        <location evidence="1">Periplasm</location>
    </subcellularLocation>
</comment>
<comment type="similarity">
    <text evidence="3">Belongs to the bacterial solute-binding protein 5 family.</text>
</comment>